<gene>
    <name evidence="1" type="primary">hemA</name>
    <name type="ordered locus">cu0224</name>
</gene>
<feature type="chain" id="PRO_1000093129" description="Glutamyl-tRNA reductase">
    <location>
        <begin position="1"/>
        <end position="494"/>
    </location>
</feature>
<feature type="region of interest" description="Disordered" evidence="2">
    <location>
        <begin position="448"/>
        <end position="494"/>
    </location>
</feature>
<feature type="compositionally biased region" description="Polar residues" evidence="2">
    <location>
        <begin position="476"/>
        <end position="486"/>
    </location>
</feature>
<feature type="active site" description="Nucleophile" evidence="1">
    <location>
        <position position="59"/>
    </location>
</feature>
<feature type="binding site" evidence="1">
    <location>
        <begin position="58"/>
        <end position="61"/>
    </location>
    <ligand>
        <name>substrate</name>
    </ligand>
</feature>
<feature type="binding site" evidence="1">
    <location>
        <position position="118"/>
    </location>
    <ligand>
        <name>substrate</name>
    </ligand>
</feature>
<feature type="binding site" evidence="1">
    <location>
        <begin position="123"/>
        <end position="125"/>
    </location>
    <ligand>
        <name>substrate</name>
    </ligand>
</feature>
<feature type="binding site" evidence="1">
    <location>
        <position position="129"/>
    </location>
    <ligand>
        <name>substrate</name>
    </ligand>
</feature>
<feature type="binding site" evidence="1">
    <location>
        <begin position="205"/>
        <end position="210"/>
    </location>
    <ligand>
        <name>NADP(+)</name>
        <dbReference type="ChEBI" id="CHEBI:58349"/>
    </ligand>
</feature>
<feature type="site" description="Important for activity" evidence="1">
    <location>
        <position position="108"/>
    </location>
</feature>
<dbReference type="EC" id="1.2.1.70" evidence="1"/>
<dbReference type="EMBL" id="AM942444">
    <property type="protein sequence ID" value="CAQ04184.1"/>
    <property type="molecule type" value="Genomic_DNA"/>
</dbReference>
<dbReference type="RefSeq" id="WP_012359490.1">
    <property type="nucleotide sequence ID" value="NC_010545.1"/>
</dbReference>
<dbReference type="SMR" id="B1VEJ5"/>
<dbReference type="STRING" id="504474.cu0224"/>
<dbReference type="GeneID" id="60605024"/>
<dbReference type="KEGG" id="cur:cu0224"/>
<dbReference type="eggNOG" id="COG0373">
    <property type="taxonomic scope" value="Bacteria"/>
</dbReference>
<dbReference type="HOGENOM" id="CLU_035113_4_0_11"/>
<dbReference type="UniPathway" id="UPA00251">
    <property type="reaction ID" value="UER00316"/>
</dbReference>
<dbReference type="Proteomes" id="UP000001727">
    <property type="component" value="Chromosome"/>
</dbReference>
<dbReference type="GO" id="GO:0008883">
    <property type="term" value="F:glutamyl-tRNA reductase activity"/>
    <property type="evidence" value="ECO:0007669"/>
    <property type="project" value="UniProtKB-UniRule"/>
</dbReference>
<dbReference type="GO" id="GO:0050661">
    <property type="term" value="F:NADP binding"/>
    <property type="evidence" value="ECO:0007669"/>
    <property type="project" value="InterPro"/>
</dbReference>
<dbReference type="GO" id="GO:0019353">
    <property type="term" value="P:protoporphyrinogen IX biosynthetic process from glutamate"/>
    <property type="evidence" value="ECO:0007669"/>
    <property type="project" value="TreeGrafter"/>
</dbReference>
<dbReference type="CDD" id="cd05213">
    <property type="entry name" value="NAD_bind_Glutamyl_tRNA_reduct"/>
    <property type="match status" value="1"/>
</dbReference>
<dbReference type="FunFam" id="3.30.460.30:FF:000001">
    <property type="entry name" value="Glutamyl-tRNA reductase"/>
    <property type="match status" value="1"/>
</dbReference>
<dbReference type="Gene3D" id="3.30.460.30">
    <property type="entry name" value="Glutamyl-tRNA reductase, N-terminal domain"/>
    <property type="match status" value="1"/>
</dbReference>
<dbReference type="Gene3D" id="3.40.50.720">
    <property type="entry name" value="NAD(P)-binding Rossmann-like Domain"/>
    <property type="match status" value="1"/>
</dbReference>
<dbReference type="HAMAP" id="MF_00087">
    <property type="entry name" value="Glu_tRNA_reductase"/>
    <property type="match status" value="1"/>
</dbReference>
<dbReference type="InterPro" id="IPR000343">
    <property type="entry name" value="4pyrrol_synth_GluRdtase"/>
</dbReference>
<dbReference type="InterPro" id="IPR015896">
    <property type="entry name" value="4pyrrol_synth_GluRdtase_dimer"/>
</dbReference>
<dbReference type="InterPro" id="IPR015895">
    <property type="entry name" value="4pyrrol_synth_GluRdtase_N"/>
</dbReference>
<dbReference type="InterPro" id="IPR018214">
    <property type="entry name" value="GluRdtase_CS"/>
</dbReference>
<dbReference type="InterPro" id="IPR036453">
    <property type="entry name" value="GluRdtase_dimer_dom_sf"/>
</dbReference>
<dbReference type="InterPro" id="IPR036343">
    <property type="entry name" value="GluRdtase_N_sf"/>
</dbReference>
<dbReference type="InterPro" id="IPR036291">
    <property type="entry name" value="NAD(P)-bd_dom_sf"/>
</dbReference>
<dbReference type="InterPro" id="IPR006151">
    <property type="entry name" value="Shikm_DH/Glu-tRNA_Rdtase"/>
</dbReference>
<dbReference type="NCBIfam" id="TIGR01035">
    <property type="entry name" value="hemA"/>
    <property type="match status" value="1"/>
</dbReference>
<dbReference type="NCBIfam" id="NF000744">
    <property type="entry name" value="PRK00045.1-3"/>
    <property type="match status" value="1"/>
</dbReference>
<dbReference type="PANTHER" id="PTHR43013">
    <property type="entry name" value="GLUTAMYL-TRNA REDUCTASE"/>
    <property type="match status" value="1"/>
</dbReference>
<dbReference type="PANTHER" id="PTHR43013:SF1">
    <property type="entry name" value="GLUTAMYL-TRNA REDUCTASE"/>
    <property type="match status" value="1"/>
</dbReference>
<dbReference type="Pfam" id="PF00745">
    <property type="entry name" value="GlutR_dimer"/>
    <property type="match status" value="1"/>
</dbReference>
<dbReference type="Pfam" id="PF05201">
    <property type="entry name" value="GlutR_N"/>
    <property type="match status" value="1"/>
</dbReference>
<dbReference type="Pfam" id="PF01488">
    <property type="entry name" value="Shikimate_DH"/>
    <property type="match status" value="1"/>
</dbReference>
<dbReference type="PIRSF" id="PIRSF000445">
    <property type="entry name" value="4pyrrol_synth_GluRdtase"/>
    <property type="match status" value="1"/>
</dbReference>
<dbReference type="SUPFAM" id="SSF69742">
    <property type="entry name" value="Glutamyl tRNA-reductase catalytic, N-terminal domain"/>
    <property type="match status" value="1"/>
</dbReference>
<dbReference type="SUPFAM" id="SSF69075">
    <property type="entry name" value="Glutamyl tRNA-reductase dimerization domain"/>
    <property type="match status" value="1"/>
</dbReference>
<dbReference type="SUPFAM" id="SSF51735">
    <property type="entry name" value="NAD(P)-binding Rossmann-fold domains"/>
    <property type="match status" value="1"/>
</dbReference>
<dbReference type="PROSITE" id="PS00747">
    <property type="entry name" value="GLUTR"/>
    <property type="match status" value="1"/>
</dbReference>
<protein>
    <recommendedName>
        <fullName evidence="1">Glutamyl-tRNA reductase</fullName>
        <shortName evidence="1">GluTR</shortName>
        <ecNumber evidence="1">1.2.1.70</ecNumber>
    </recommendedName>
</protein>
<proteinExistence type="inferred from homology"/>
<name>HEM1_CORU7</name>
<accession>B1VEJ5</accession>
<evidence type="ECO:0000255" key="1">
    <source>
        <dbReference type="HAMAP-Rule" id="MF_00087"/>
    </source>
</evidence>
<evidence type="ECO:0000256" key="2">
    <source>
        <dbReference type="SAM" id="MobiDB-lite"/>
    </source>
</evidence>
<keyword id="KW-0521">NADP</keyword>
<keyword id="KW-0560">Oxidoreductase</keyword>
<keyword id="KW-0627">Porphyrin biosynthesis</keyword>
<keyword id="KW-1185">Reference proteome</keyword>
<reference key="1">
    <citation type="journal article" date="2008" name="J. Biotechnol.">
        <title>The lifestyle of Corynebacterium urealyticum derived from its complete genome sequence established by pyrosequencing.</title>
        <authorList>
            <person name="Tauch A."/>
            <person name="Trost E."/>
            <person name="Tilker A."/>
            <person name="Ludewig U."/>
            <person name="Schneiker S."/>
            <person name="Goesmann A."/>
            <person name="Arnold W."/>
            <person name="Bekel T."/>
            <person name="Brinkrolf K."/>
            <person name="Brune I."/>
            <person name="Goetker S."/>
            <person name="Kalinowski J."/>
            <person name="Kamp P.-B."/>
            <person name="Lobo F.P."/>
            <person name="Viehoever P."/>
            <person name="Weisshaar B."/>
            <person name="Soriano F."/>
            <person name="Droege M."/>
            <person name="Puehler A."/>
        </authorList>
    </citation>
    <scope>NUCLEOTIDE SEQUENCE [LARGE SCALE GENOMIC DNA]</scope>
    <source>
        <strain>ATCC 43042 / DSM 7109</strain>
    </source>
</reference>
<organism>
    <name type="scientific">Corynebacterium urealyticum (strain ATCC 43042 / DSM 7109)</name>
    <dbReference type="NCBI Taxonomy" id="504474"/>
    <lineage>
        <taxon>Bacteria</taxon>
        <taxon>Bacillati</taxon>
        <taxon>Actinomycetota</taxon>
        <taxon>Actinomycetes</taxon>
        <taxon>Mycobacteriales</taxon>
        <taxon>Corynebacteriaceae</taxon>
        <taxon>Corynebacterium</taxon>
    </lineage>
</organism>
<comment type="function">
    <text evidence="1">Catalyzes the NADPH-dependent reduction of glutamyl-tRNA(Glu) to glutamate 1-semialdehyde (GSA).</text>
</comment>
<comment type="catalytic activity">
    <reaction evidence="1">
        <text>(S)-4-amino-5-oxopentanoate + tRNA(Glu) + NADP(+) = L-glutamyl-tRNA(Glu) + NADPH + H(+)</text>
        <dbReference type="Rhea" id="RHEA:12344"/>
        <dbReference type="Rhea" id="RHEA-COMP:9663"/>
        <dbReference type="Rhea" id="RHEA-COMP:9680"/>
        <dbReference type="ChEBI" id="CHEBI:15378"/>
        <dbReference type="ChEBI" id="CHEBI:57501"/>
        <dbReference type="ChEBI" id="CHEBI:57783"/>
        <dbReference type="ChEBI" id="CHEBI:58349"/>
        <dbReference type="ChEBI" id="CHEBI:78442"/>
        <dbReference type="ChEBI" id="CHEBI:78520"/>
        <dbReference type="EC" id="1.2.1.70"/>
    </reaction>
</comment>
<comment type="pathway">
    <text evidence="1">Porphyrin-containing compound metabolism; protoporphyrin-IX biosynthesis; 5-aminolevulinate from L-glutamyl-tRNA(Glu): step 1/2.</text>
</comment>
<comment type="subunit">
    <text evidence="1">Homodimer.</text>
</comment>
<comment type="domain">
    <text evidence="1">Possesses an unusual extended V-shaped dimeric structure with each monomer consisting of three distinct domains arranged along a curved 'spinal' alpha-helix. The N-terminal catalytic domain specifically recognizes the glutamate moiety of the substrate. The second domain is the NADPH-binding domain, and the third C-terminal domain is responsible for dimerization.</text>
</comment>
<comment type="miscellaneous">
    <text evidence="1">During catalysis, the active site Cys acts as a nucleophile attacking the alpha-carbonyl group of tRNA-bound glutamate with the formation of a thioester intermediate between enzyme and glutamate, and the concomitant release of tRNA(Glu). The thioester intermediate is finally reduced by direct hydride transfer from NADPH, to form the product GSA.</text>
</comment>
<comment type="similarity">
    <text evidence="1">Belongs to the glutamyl-tRNA reductase family.</text>
</comment>
<sequence>MAGHVHTGSAAVLLVGLSFRSAPVSLLEQVSTVDTDLPKLENALLDHDSLSEALVLSTCNRMEFYTVANAFHPGLDHIVDTIATYSGLDDSELEPHLYVHYSDAAVEHMLNVASGLDSMVLGEQQIIGQLRGAYEESKGAGTVGRTLHDLTQRALRTGKRVHSETEIDSAGSSMVSFALDRALTVLGIPEASSDALSGRRAVVIGAGAMASLASTHLGRLGIEHVTVANRTVDRAEQLASHAVEAGVPARGIGLDELPAALTGADIVVSATGAVGTVVSAADIKAAQQVRDGRQQVLIDLSMPRDIEQATADVPGVALLNIEELTGMTEDTIEDEDAARGIVAEELESFLEQQRAQAVVPTVKALRQQAMDALSNEMLALQRQTPGMSDEDREAVNRSMRRLVEKLLHTPTVQAKKLSAAGQSVSYPDALAALFNLPTGMTQQVSAVKGANAGSGQRKKQKPQENRVSTARAVYRSTYQDLTQASTPGGKDDDQ</sequence>